<comment type="function">
    <text evidence="1">Catalyzes the ATP-dependent condensation of GlcN-Ins and L-cysteine to form L-Cys-GlcN-Ins.</text>
</comment>
<comment type="catalytic activity">
    <reaction evidence="1">
        <text>1D-myo-inositol 2-amino-2-deoxy-alpha-D-glucopyranoside + L-cysteine + ATP = 1D-myo-inositol 2-(L-cysteinylamino)-2-deoxy-alpha-D-glucopyranoside + AMP + diphosphate + H(+)</text>
        <dbReference type="Rhea" id="RHEA:26176"/>
        <dbReference type="ChEBI" id="CHEBI:15378"/>
        <dbReference type="ChEBI" id="CHEBI:30616"/>
        <dbReference type="ChEBI" id="CHEBI:33019"/>
        <dbReference type="ChEBI" id="CHEBI:35235"/>
        <dbReference type="ChEBI" id="CHEBI:58886"/>
        <dbReference type="ChEBI" id="CHEBI:58887"/>
        <dbReference type="ChEBI" id="CHEBI:456215"/>
        <dbReference type="EC" id="6.3.1.13"/>
    </reaction>
</comment>
<comment type="cofactor">
    <cofactor evidence="1">
        <name>Zn(2+)</name>
        <dbReference type="ChEBI" id="CHEBI:29105"/>
    </cofactor>
    <text evidence="1">Binds 1 zinc ion per subunit.</text>
</comment>
<comment type="subunit">
    <text evidence="1">Monomer.</text>
</comment>
<comment type="similarity">
    <text evidence="1">Belongs to the class-I aminoacyl-tRNA synthetase family. MshC subfamily.</text>
</comment>
<accession>D0LDR0</accession>
<evidence type="ECO:0000255" key="1">
    <source>
        <dbReference type="HAMAP-Rule" id="MF_01697"/>
    </source>
</evidence>
<proteinExistence type="inferred from homology"/>
<sequence length="413" mass="45369">MQSWPDPEVPKLSGDSPALRLYDTADRAVRPVAPGPTATLYVCGITPYDATHLGHAATYVTFDQVNRVLRDQGHDVHYVQNITDVDDPLFERAERDGVDWRELGSEQIQLFRDDMTALRVLPPRDYIGAMESVDEVIEAVEKLLASGAAYVVDDPEYPDVYFRTDATEQFGYESGYDRATMARFFAERGGDPDRAGKRDPLDAVLWRAARDGEPSWEAPFGPGRPGWHIECSAIALNRLGIEFDIQGGGNDLIFPHHEFSAAHGEALTDSRRFARHYVHTGMVGLDGEKMSKSRGNLVFVSVLRRDGVDPAAIRLALLADHYRSDRMWTDDVLATAVDRLQRWRTAAAAPAGPDAAPTVARLRQHLADDLDTPKALDAVDAWCADVRTGIGSDPAAPAQIARAVDALLGVVIA</sequence>
<feature type="chain" id="PRO_0000400449" description="L-cysteine:1D-myo-inositol 2-amino-2-deoxy-alpha-D-glucopyranoside ligase">
    <location>
        <begin position="1"/>
        <end position="413"/>
    </location>
</feature>
<feature type="short sequence motif" description="'HIGH' region" evidence="1">
    <location>
        <begin position="45"/>
        <end position="55"/>
    </location>
</feature>
<feature type="short sequence motif" description="'ERGGDP' region" evidence="1">
    <location>
        <begin position="187"/>
        <end position="192"/>
    </location>
</feature>
<feature type="short sequence motif" description="'KMSKS' region" evidence="1">
    <location>
        <begin position="289"/>
        <end position="293"/>
    </location>
</feature>
<feature type="binding site" evidence="1">
    <location>
        <begin position="43"/>
        <end position="46"/>
    </location>
    <ligand>
        <name>L-cysteinyl-5'-AMP</name>
        <dbReference type="ChEBI" id="CHEBI:144924"/>
    </ligand>
</feature>
<feature type="binding site" evidence="1">
    <location>
        <position position="43"/>
    </location>
    <ligand>
        <name>Zn(2+)</name>
        <dbReference type="ChEBI" id="CHEBI:29105"/>
    </ligand>
</feature>
<feature type="binding site" evidence="1">
    <location>
        <position position="58"/>
    </location>
    <ligand>
        <name>L-cysteinyl-5'-AMP</name>
        <dbReference type="ChEBI" id="CHEBI:144924"/>
    </ligand>
</feature>
<feature type="binding site" evidence="1">
    <location>
        <begin position="81"/>
        <end position="83"/>
    </location>
    <ligand>
        <name>L-cysteinyl-5'-AMP</name>
        <dbReference type="ChEBI" id="CHEBI:144924"/>
    </ligand>
</feature>
<feature type="binding site" evidence="1">
    <location>
        <position position="227"/>
    </location>
    <ligand>
        <name>L-cysteinyl-5'-AMP</name>
        <dbReference type="ChEBI" id="CHEBI:144924"/>
    </ligand>
</feature>
<feature type="binding site" evidence="1">
    <location>
        <position position="231"/>
    </location>
    <ligand>
        <name>Zn(2+)</name>
        <dbReference type="ChEBI" id="CHEBI:29105"/>
    </ligand>
</feature>
<feature type="binding site" evidence="1">
    <location>
        <begin position="249"/>
        <end position="251"/>
    </location>
    <ligand>
        <name>L-cysteinyl-5'-AMP</name>
        <dbReference type="ChEBI" id="CHEBI:144924"/>
    </ligand>
</feature>
<feature type="binding site" evidence="1">
    <location>
        <position position="256"/>
    </location>
    <ligand>
        <name>Zn(2+)</name>
        <dbReference type="ChEBI" id="CHEBI:29105"/>
    </ligand>
</feature>
<feature type="binding site" evidence="1">
    <location>
        <position position="283"/>
    </location>
    <ligand>
        <name>L-cysteinyl-5'-AMP</name>
        <dbReference type="ChEBI" id="CHEBI:144924"/>
    </ligand>
</feature>
<reference key="1">
    <citation type="submission" date="2009-10" db="EMBL/GenBank/DDBJ databases">
        <title>The complete chromosome of Gordonia bronchialis DSM 43247.</title>
        <authorList>
            <consortium name="US DOE Joint Genome Institute (JGI-PGF)"/>
            <person name="Lucas S."/>
            <person name="Copeland A."/>
            <person name="Lapidus A."/>
            <person name="Glavina del Rio T."/>
            <person name="Dalin E."/>
            <person name="Tice H."/>
            <person name="Bruce D."/>
            <person name="Goodwin L."/>
            <person name="Pitluck S."/>
            <person name="Kyrpides N."/>
            <person name="Mavromatis K."/>
            <person name="Ivanova N."/>
            <person name="Ovchinnikova G."/>
            <person name="Saunders E."/>
            <person name="Brettin T."/>
            <person name="Detter J.C."/>
            <person name="Han C."/>
            <person name="Larimer F."/>
            <person name="Land M."/>
            <person name="Hauser L."/>
            <person name="Markowitz V."/>
            <person name="Cheng J.-F."/>
            <person name="Hugenholtz P."/>
            <person name="Woyke T."/>
            <person name="Wu D."/>
            <person name="Jando M."/>
            <person name="Schneider S."/>
            <person name="Goeker M."/>
            <person name="Klenk H.-P."/>
            <person name="Eisen J.A."/>
        </authorList>
    </citation>
    <scope>NUCLEOTIDE SEQUENCE [LARGE SCALE GENOMIC DNA]</scope>
    <source>
        <strain>ATCC 25592 / DSM 43247 / BCRC 13721 / JCM 3198 / KCTC 3076 / NBRC 16047 / NCTC 10667</strain>
    </source>
</reference>
<name>MSHC_GORB4</name>
<keyword id="KW-0067">ATP-binding</keyword>
<keyword id="KW-0436">Ligase</keyword>
<keyword id="KW-0479">Metal-binding</keyword>
<keyword id="KW-0547">Nucleotide-binding</keyword>
<keyword id="KW-1185">Reference proteome</keyword>
<keyword id="KW-0862">Zinc</keyword>
<dbReference type="EC" id="6.3.1.13" evidence="1"/>
<dbReference type="EMBL" id="CP001802">
    <property type="protein sequence ID" value="ACY21683.1"/>
    <property type="molecule type" value="Genomic_DNA"/>
</dbReference>
<dbReference type="RefSeq" id="WP_012834238.1">
    <property type="nucleotide sequence ID" value="NC_013441.1"/>
</dbReference>
<dbReference type="SMR" id="D0LDR0"/>
<dbReference type="STRING" id="526226.Gbro_2442"/>
<dbReference type="KEGG" id="gbr:Gbro_2442"/>
<dbReference type="eggNOG" id="COG0215">
    <property type="taxonomic scope" value="Bacteria"/>
</dbReference>
<dbReference type="HOGENOM" id="CLU_013528_0_0_11"/>
<dbReference type="OrthoDB" id="9815130at2"/>
<dbReference type="Proteomes" id="UP000001219">
    <property type="component" value="Chromosome"/>
</dbReference>
<dbReference type="GO" id="GO:0005829">
    <property type="term" value="C:cytosol"/>
    <property type="evidence" value="ECO:0007669"/>
    <property type="project" value="TreeGrafter"/>
</dbReference>
<dbReference type="GO" id="GO:0005524">
    <property type="term" value="F:ATP binding"/>
    <property type="evidence" value="ECO:0007669"/>
    <property type="project" value="UniProtKB-KW"/>
</dbReference>
<dbReference type="GO" id="GO:0035446">
    <property type="term" value="F:cysteine-glucosaminylinositol ligase activity"/>
    <property type="evidence" value="ECO:0007669"/>
    <property type="project" value="UniProtKB-UniRule"/>
</dbReference>
<dbReference type="GO" id="GO:0004817">
    <property type="term" value="F:cysteine-tRNA ligase activity"/>
    <property type="evidence" value="ECO:0007669"/>
    <property type="project" value="TreeGrafter"/>
</dbReference>
<dbReference type="GO" id="GO:0008270">
    <property type="term" value="F:zinc ion binding"/>
    <property type="evidence" value="ECO:0007669"/>
    <property type="project" value="UniProtKB-UniRule"/>
</dbReference>
<dbReference type="GO" id="GO:0006423">
    <property type="term" value="P:cysteinyl-tRNA aminoacylation"/>
    <property type="evidence" value="ECO:0007669"/>
    <property type="project" value="TreeGrafter"/>
</dbReference>
<dbReference type="GO" id="GO:0010125">
    <property type="term" value="P:mycothiol biosynthetic process"/>
    <property type="evidence" value="ECO:0007669"/>
    <property type="project" value="UniProtKB-UniRule"/>
</dbReference>
<dbReference type="CDD" id="cd00672">
    <property type="entry name" value="CysRS_core"/>
    <property type="match status" value="1"/>
</dbReference>
<dbReference type="FunFam" id="3.40.50.620:FF:000134">
    <property type="entry name" value="L-cysteine:1D-myo-inositol 2-amino-2-deoxy-alpha-D-glucopyranoside ligase"/>
    <property type="match status" value="1"/>
</dbReference>
<dbReference type="Gene3D" id="1.20.120.640">
    <property type="entry name" value="Anticodon-binding domain of a subclass of class I aminoacyl-tRNA synthetases"/>
    <property type="match status" value="1"/>
</dbReference>
<dbReference type="Gene3D" id="3.40.50.620">
    <property type="entry name" value="HUPs"/>
    <property type="match status" value="1"/>
</dbReference>
<dbReference type="HAMAP" id="MF_01697">
    <property type="entry name" value="MshC"/>
    <property type="match status" value="1"/>
</dbReference>
<dbReference type="InterPro" id="IPR024909">
    <property type="entry name" value="Cys-tRNA/MSH_ligase"/>
</dbReference>
<dbReference type="InterPro" id="IPR017812">
    <property type="entry name" value="Mycothiol_ligase_MshC"/>
</dbReference>
<dbReference type="InterPro" id="IPR014729">
    <property type="entry name" value="Rossmann-like_a/b/a_fold"/>
</dbReference>
<dbReference type="InterPro" id="IPR032678">
    <property type="entry name" value="tRNA-synt_1_cat_dom"/>
</dbReference>
<dbReference type="NCBIfam" id="TIGR03447">
    <property type="entry name" value="mycothiol_MshC"/>
    <property type="match status" value="1"/>
</dbReference>
<dbReference type="PANTHER" id="PTHR10890:SF3">
    <property type="entry name" value="CYSTEINE--TRNA LIGASE, CYTOPLASMIC"/>
    <property type="match status" value="1"/>
</dbReference>
<dbReference type="PANTHER" id="PTHR10890">
    <property type="entry name" value="CYSTEINYL-TRNA SYNTHETASE"/>
    <property type="match status" value="1"/>
</dbReference>
<dbReference type="Pfam" id="PF01406">
    <property type="entry name" value="tRNA-synt_1e"/>
    <property type="match status" value="1"/>
</dbReference>
<dbReference type="PRINTS" id="PR00983">
    <property type="entry name" value="TRNASYNTHCYS"/>
</dbReference>
<dbReference type="SUPFAM" id="SSF52374">
    <property type="entry name" value="Nucleotidylyl transferase"/>
    <property type="match status" value="1"/>
</dbReference>
<organism>
    <name type="scientific">Gordonia bronchialis (strain ATCC 25592 / DSM 43247 / BCRC 13721 / JCM 3198 / KCTC 3076 / NBRC 16047 / NCTC 10667)</name>
    <name type="common">Rhodococcus bronchialis</name>
    <dbReference type="NCBI Taxonomy" id="526226"/>
    <lineage>
        <taxon>Bacteria</taxon>
        <taxon>Bacillati</taxon>
        <taxon>Actinomycetota</taxon>
        <taxon>Actinomycetes</taxon>
        <taxon>Mycobacteriales</taxon>
        <taxon>Gordoniaceae</taxon>
        <taxon>Gordonia</taxon>
    </lineage>
</organism>
<protein>
    <recommendedName>
        <fullName evidence="1">L-cysteine:1D-myo-inositol 2-amino-2-deoxy-alpha-D-glucopyranoside ligase</fullName>
        <shortName evidence="1">L-Cys:GlcN-Ins ligase</shortName>
        <ecNumber evidence="1">6.3.1.13</ecNumber>
    </recommendedName>
    <alternativeName>
        <fullName evidence="1">Mycothiol ligase</fullName>
        <shortName evidence="1">MSH ligase</shortName>
    </alternativeName>
</protein>
<gene>
    <name evidence="1" type="primary">mshC</name>
    <name type="ordered locus">Gbro_2442</name>
</gene>